<feature type="chain" id="PRO_0000226194" description="Ketol-acid reductoisomerase (NADP(+))">
    <location>
        <begin position="1"/>
        <end position="338"/>
    </location>
</feature>
<feature type="domain" description="KARI N-terminal Rossmann" evidence="2">
    <location>
        <begin position="1"/>
        <end position="181"/>
    </location>
</feature>
<feature type="domain" description="KARI C-terminal knotted" evidence="3">
    <location>
        <begin position="182"/>
        <end position="327"/>
    </location>
</feature>
<feature type="active site" evidence="1">
    <location>
        <position position="107"/>
    </location>
</feature>
<feature type="binding site" evidence="1">
    <location>
        <begin position="24"/>
        <end position="27"/>
    </location>
    <ligand>
        <name>NADP(+)</name>
        <dbReference type="ChEBI" id="CHEBI:58349"/>
    </ligand>
</feature>
<feature type="binding site" evidence="1">
    <location>
        <position position="47"/>
    </location>
    <ligand>
        <name>NADP(+)</name>
        <dbReference type="ChEBI" id="CHEBI:58349"/>
    </ligand>
</feature>
<feature type="binding site" evidence="1">
    <location>
        <position position="50"/>
    </location>
    <ligand>
        <name>NADP(+)</name>
        <dbReference type="ChEBI" id="CHEBI:58349"/>
    </ligand>
</feature>
<feature type="binding site" evidence="1">
    <location>
        <position position="52"/>
    </location>
    <ligand>
        <name>NADP(+)</name>
        <dbReference type="ChEBI" id="CHEBI:58349"/>
    </ligand>
</feature>
<feature type="binding site" evidence="1">
    <location>
        <begin position="82"/>
        <end position="85"/>
    </location>
    <ligand>
        <name>NADP(+)</name>
        <dbReference type="ChEBI" id="CHEBI:58349"/>
    </ligand>
</feature>
<feature type="binding site" evidence="1">
    <location>
        <position position="133"/>
    </location>
    <ligand>
        <name>NADP(+)</name>
        <dbReference type="ChEBI" id="CHEBI:58349"/>
    </ligand>
</feature>
<feature type="binding site" evidence="1">
    <location>
        <position position="190"/>
    </location>
    <ligand>
        <name>Mg(2+)</name>
        <dbReference type="ChEBI" id="CHEBI:18420"/>
        <label>1</label>
    </ligand>
</feature>
<feature type="binding site" evidence="1">
    <location>
        <position position="190"/>
    </location>
    <ligand>
        <name>Mg(2+)</name>
        <dbReference type="ChEBI" id="CHEBI:18420"/>
        <label>2</label>
    </ligand>
</feature>
<feature type="binding site" evidence="1">
    <location>
        <position position="194"/>
    </location>
    <ligand>
        <name>Mg(2+)</name>
        <dbReference type="ChEBI" id="CHEBI:18420"/>
        <label>1</label>
    </ligand>
</feature>
<feature type="binding site" evidence="1">
    <location>
        <position position="226"/>
    </location>
    <ligand>
        <name>Mg(2+)</name>
        <dbReference type="ChEBI" id="CHEBI:18420"/>
        <label>2</label>
    </ligand>
</feature>
<feature type="binding site" evidence="1">
    <location>
        <position position="230"/>
    </location>
    <ligand>
        <name>Mg(2+)</name>
        <dbReference type="ChEBI" id="CHEBI:18420"/>
        <label>2</label>
    </ligand>
</feature>
<feature type="binding site" evidence="1">
    <location>
        <position position="251"/>
    </location>
    <ligand>
        <name>substrate</name>
    </ligand>
</feature>
<gene>
    <name evidence="1" type="primary">ilvC</name>
    <name type="ordered locus">Psyc_0529</name>
</gene>
<proteinExistence type="inferred from homology"/>
<comment type="function">
    <text evidence="1">Involved in the biosynthesis of branched-chain amino acids (BCAA). Catalyzes an alkyl-migration followed by a ketol-acid reduction of (S)-2-acetolactate (S2AL) to yield (R)-2,3-dihydroxy-isovalerate. In the isomerase reaction, S2AL is rearranged via a Mg-dependent methyl migration to produce 3-hydroxy-3-methyl-2-ketobutyrate (HMKB). In the reductase reaction, this 2-ketoacid undergoes a metal-dependent reduction by NADPH to yield (R)-2,3-dihydroxy-isovalerate.</text>
</comment>
<comment type="catalytic activity">
    <reaction evidence="1">
        <text>(2R)-2,3-dihydroxy-3-methylbutanoate + NADP(+) = (2S)-2-acetolactate + NADPH + H(+)</text>
        <dbReference type="Rhea" id="RHEA:22068"/>
        <dbReference type="ChEBI" id="CHEBI:15378"/>
        <dbReference type="ChEBI" id="CHEBI:49072"/>
        <dbReference type="ChEBI" id="CHEBI:57783"/>
        <dbReference type="ChEBI" id="CHEBI:58349"/>
        <dbReference type="ChEBI" id="CHEBI:58476"/>
        <dbReference type="EC" id="1.1.1.86"/>
    </reaction>
</comment>
<comment type="catalytic activity">
    <reaction evidence="1">
        <text>(2R,3R)-2,3-dihydroxy-3-methylpentanoate + NADP(+) = (S)-2-ethyl-2-hydroxy-3-oxobutanoate + NADPH + H(+)</text>
        <dbReference type="Rhea" id="RHEA:13493"/>
        <dbReference type="ChEBI" id="CHEBI:15378"/>
        <dbReference type="ChEBI" id="CHEBI:49256"/>
        <dbReference type="ChEBI" id="CHEBI:49258"/>
        <dbReference type="ChEBI" id="CHEBI:57783"/>
        <dbReference type="ChEBI" id="CHEBI:58349"/>
        <dbReference type="EC" id="1.1.1.86"/>
    </reaction>
</comment>
<comment type="cofactor">
    <cofactor evidence="1">
        <name>Mg(2+)</name>
        <dbReference type="ChEBI" id="CHEBI:18420"/>
    </cofactor>
    <text evidence="1">Binds 2 magnesium ions per subunit.</text>
</comment>
<comment type="pathway">
    <text evidence="1">Amino-acid biosynthesis; L-isoleucine biosynthesis; L-isoleucine from 2-oxobutanoate: step 2/4.</text>
</comment>
<comment type="pathway">
    <text evidence="1">Amino-acid biosynthesis; L-valine biosynthesis; L-valine from pyruvate: step 2/4.</text>
</comment>
<comment type="similarity">
    <text evidence="1">Belongs to the ketol-acid reductoisomerase family.</text>
</comment>
<organism>
    <name type="scientific">Psychrobacter arcticus (strain DSM 17307 / VKM B-2377 / 273-4)</name>
    <dbReference type="NCBI Taxonomy" id="259536"/>
    <lineage>
        <taxon>Bacteria</taxon>
        <taxon>Pseudomonadati</taxon>
        <taxon>Pseudomonadota</taxon>
        <taxon>Gammaproteobacteria</taxon>
        <taxon>Moraxellales</taxon>
        <taxon>Moraxellaceae</taxon>
        <taxon>Psychrobacter</taxon>
    </lineage>
</organism>
<dbReference type="EC" id="1.1.1.86" evidence="1"/>
<dbReference type="EMBL" id="CP000082">
    <property type="protein sequence ID" value="AAZ18392.1"/>
    <property type="molecule type" value="Genomic_DNA"/>
</dbReference>
<dbReference type="RefSeq" id="WP_011279823.1">
    <property type="nucleotide sequence ID" value="NC_007204.1"/>
</dbReference>
<dbReference type="SMR" id="Q4FUB6"/>
<dbReference type="STRING" id="259536.Psyc_0529"/>
<dbReference type="KEGG" id="par:Psyc_0529"/>
<dbReference type="eggNOG" id="COG0059">
    <property type="taxonomic scope" value="Bacteria"/>
</dbReference>
<dbReference type="HOGENOM" id="CLU_033821_0_1_6"/>
<dbReference type="OrthoDB" id="9804088at2"/>
<dbReference type="UniPathway" id="UPA00047">
    <property type="reaction ID" value="UER00056"/>
</dbReference>
<dbReference type="UniPathway" id="UPA00049">
    <property type="reaction ID" value="UER00060"/>
</dbReference>
<dbReference type="Proteomes" id="UP000000546">
    <property type="component" value="Chromosome"/>
</dbReference>
<dbReference type="GO" id="GO:0005829">
    <property type="term" value="C:cytosol"/>
    <property type="evidence" value="ECO:0007669"/>
    <property type="project" value="TreeGrafter"/>
</dbReference>
<dbReference type="GO" id="GO:0004455">
    <property type="term" value="F:ketol-acid reductoisomerase activity"/>
    <property type="evidence" value="ECO:0007669"/>
    <property type="project" value="UniProtKB-UniRule"/>
</dbReference>
<dbReference type="GO" id="GO:0000287">
    <property type="term" value="F:magnesium ion binding"/>
    <property type="evidence" value="ECO:0007669"/>
    <property type="project" value="UniProtKB-UniRule"/>
</dbReference>
<dbReference type="GO" id="GO:0050661">
    <property type="term" value="F:NADP binding"/>
    <property type="evidence" value="ECO:0007669"/>
    <property type="project" value="InterPro"/>
</dbReference>
<dbReference type="GO" id="GO:0009097">
    <property type="term" value="P:isoleucine biosynthetic process"/>
    <property type="evidence" value="ECO:0007669"/>
    <property type="project" value="UniProtKB-UniRule"/>
</dbReference>
<dbReference type="GO" id="GO:0009099">
    <property type="term" value="P:L-valine biosynthetic process"/>
    <property type="evidence" value="ECO:0007669"/>
    <property type="project" value="UniProtKB-UniRule"/>
</dbReference>
<dbReference type="FunFam" id="3.40.50.720:FF:000023">
    <property type="entry name" value="Ketol-acid reductoisomerase (NADP(+))"/>
    <property type="match status" value="1"/>
</dbReference>
<dbReference type="Gene3D" id="6.10.240.10">
    <property type="match status" value="1"/>
</dbReference>
<dbReference type="Gene3D" id="3.40.50.720">
    <property type="entry name" value="NAD(P)-binding Rossmann-like Domain"/>
    <property type="match status" value="1"/>
</dbReference>
<dbReference type="HAMAP" id="MF_00435">
    <property type="entry name" value="IlvC"/>
    <property type="match status" value="1"/>
</dbReference>
<dbReference type="InterPro" id="IPR008927">
    <property type="entry name" value="6-PGluconate_DH-like_C_sf"/>
</dbReference>
<dbReference type="InterPro" id="IPR013023">
    <property type="entry name" value="KARI"/>
</dbReference>
<dbReference type="InterPro" id="IPR000506">
    <property type="entry name" value="KARI_C"/>
</dbReference>
<dbReference type="InterPro" id="IPR013116">
    <property type="entry name" value="KARI_N"/>
</dbReference>
<dbReference type="InterPro" id="IPR014359">
    <property type="entry name" value="KARI_prok"/>
</dbReference>
<dbReference type="InterPro" id="IPR036291">
    <property type="entry name" value="NAD(P)-bd_dom_sf"/>
</dbReference>
<dbReference type="NCBIfam" id="TIGR00465">
    <property type="entry name" value="ilvC"/>
    <property type="match status" value="1"/>
</dbReference>
<dbReference type="NCBIfam" id="NF004017">
    <property type="entry name" value="PRK05479.1"/>
    <property type="match status" value="1"/>
</dbReference>
<dbReference type="NCBIfam" id="NF009940">
    <property type="entry name" value="PRK13403.1"/>
    <property type="match status" value="1"/>
</dbReference>
<dbReference type="PANTHER" id="PTHR21371">
    <property type="entry name" value="KETOL-ACID REDUCTOISOMERASE, MITOCHONDRIAL"/>
    <property type="match status" value="1"/>
</dbReference>
<dbReference type="PANTHER" id="PTHR21371:SF1">
    <property type="entry name" value="KETOL-ACID REDUCTOISOMERASE, MITOCHONDRIAL"/>
    <property type="match status" value="1"/>
</dbReference>
<dbReference type="Pfam" id="PF01450">
    <property type="entry name" value="KARI_C"/>
    <property type="match status" value="1"/>
</dbReference>
<dbReference type="Pfam" id="PF07991">
    <property type="entry name" value="KARI_N"/>
    <property type="match status" value="1"/>
</dbReference>
<dbReference type="PIRSF" id="PIRSF000116">
    <property type="entry name" value="IlvC_gammaproteo"/>
    <property type="match status" value="1"/>
</dbReference>
<dbReference type="SUPFAM" id="SSF48179">
    <property type="entry name" value="6-phosphogluconate dehydrogenase C-terminal domain-like"/>
    <property type="match status" value="1"/>
</dbReference>
<dbReference type="SUPFAM" id="SSF51735">
    <property type="entry name" value="NAD(P)-binding Rossmann-fold domains"/>
    <property type="match status" value="1"/>
</dbReference>
<dbReference type="PROSITE" id="PS51851">
    <property type="entry name" value="KARI_C"/>
    <property type="match status" value="1"/>
</dbReference>
<dbReference type="PROSITE" id="PS51850">
    <property type="entry name" value="KARI_N"/>
    <property type="match status" value="1"/>
</dbReference>
<protein>
    <recommendedName>
        <fullName evidence="1">Ketol-acid reductoisomerase (NADP(+))</fullName>
        <shortName evidence="1">KARI</shortName>
        <ecNumber evidence="1">1.1.1.86</ecNumber>
    </recommendedName>
    <alternativeName>
        <fullName evidence="1">Acetohydroxy-acid isomeroreductase</fullName>
        <shortName evidence="1">AHIR</shortName>
    </alternativeName>
    <alternativeName>
        <fullName evidence="1">Alpha-keto-beta-hydroxylacyl reductoisomerase</fullName>
    </alternativeName>
    <alternativeName>
        <fullName evidence="1">Ketol-acid reductoisomerase type 1</fullName>
    </alternativeName>
    <alternativeName>
        <fullName evidence="1">Ketol-acid reductoisomerase type I</fullName>
    </alternativeName>
</protein>
<accession>Q4FUB6</accession>
<evidence type="ECO:0000255" key="1">
    <source>
        <dbReference type="HAMAP-Rule" id="MF_00435"/>
    </source>
</evidence>
<evidence type="ECO:0000255" key="2">
    <source>
        <dbReference type="PROSITE-ProRule" id="PRU01197"/>
    </source>
</evidence>
<evidence type="ECO:0000255" key="3">
    <source>
        <dbReference type="PROSITE-ProRule" id="PRU01198"/>
    </source>
</evidence>
<keyword id="KW-0028">Amino-acid biosynthesis</keyword>
<keyword id="KW-0100">Branched-chain amino acid biosynthesis</keyword>
<keyword id="KW-0460">Magnesium</keyword>
<keyword id="KW-0479">Metal-binding</keyword>
<keyword id="KW-0521">NADP</keyword>
<keyword id="KW-0560">Oxidoreductase</keyword>
<keyword id="KW-1185">Reference proteome</keyword>
<name>ILVC_PSYA2</name>
<reference key="1">
    <citation type="journal article" date="2010" name="Appl. Environ. Microbiol.">
        <title>The genome sequence of Psychrobacter arcticus 273-4, a psychroactive Siberian permafrost bacterium, reveals mechanisms for adaptation to low-temperature growth.</title>
        <authorList>
            <person name="Ayala-del-Rio H.L."/>
            <person name="Chain P.S."/>
            <person name="Grzymski J.J."/>
            <person name="Ponder M.A."/>
            <person name="Ivanova N."/>
            <person name="Bergholz P.W."/>
            <person name="Di Bartolo G."/>
            <person name="Hauser L."/>
            <person name="Land M."/>
            <person name="Bakermans C."/>
            <person name="Rodrigues D."/>
            <person name="Klappenbach J."/>
            <person name="Zarka D."/>
            <person name="Larimer F."/>
            <person name="Richardson P."/>
            <person name="Murray A."/>
            <person name="Thomashow M."/>
            <person name="Tiedje J.M."/>
        </authorList>
    </citation>
    <scope>NUCLEOTIDE SEQUENCE [LARGE SCALE GENOMIC DNA]</scope>
    <source>
        <strain>DSM 17307 / VKM B-2377 / 273-4</strain>
    </source>
</reference>
<sequence>MNVYYDKDCDLSIVQGKKVAIIGYGSQGHAHALNLQDSNVDVTVGLRADSGSWKKAENAGLKVAEVEEAVKAADIIMILTPDEFQKELYNDVIEPNIKQGATLAFAHGFAIHYNQVIPRSDLDVIMVAPKAPGHTVRSEFAKGGGIPDLIAIYQDASGQAKQLALSYAAGVGGGRSGIIETTFKDETETDLFGEQAVLCGGAVELVKMGFETLTEAGYAPEMAYFECLHELKLIVDLMYEGGIADMNYSISNNAEYGEYVTGPEVINEQSREAMRNALKRIQSGEYAKMFISEGATNYPSMTARRRNNAEHQIEITGAKLRGMMPWIGGNKIIDKDKN</sequence>